<organism>
    <name type="scientific">Corynebacterium glutamicum (strain ATCC 13032 / DSM 20300 / JCM 1318 / BCRC 11384 / CCUG 27702 / LMG 3730 / NBRC 12168 / NCIMB 10025 / NRRL B-2784 / 534)</name>
    <dbReference type="NCBI Taxonomy" id="196627"/>
    <lineage>
        <taxon>Bacteria</taxon>
        <taxon>Bacillati</taxon>
        <taxon>Actinomycetota</taxon>
        <taxon>Actinomycetes</taxon>
        <taxon>Mycobacteriales</taxon>
        <taxon>Corynebacteriaceae</taxon>
        <taxon>Corynebacterium</taxon>
    </lineage>
</organism>
<evidence type="ECO:0000255" key="1">
    <source>
        <dbReference type="HAMAP-Rule" id="MF_00451"/>
    </source>
</evidence>
<protein>
    <recommendedName>
        <fullName evidence="1">Nucleoside diphosphate kinase</fullName>
        <shortName evidence="1">NDK</shortName>
        <shortName evidence="1">NDP kinase</shortName>
        <ecNumber evidence="1">2.7.4.6</ecNumber>
    </recommendedName>
    <alternativeName>
        <fullName evidence="1">Nucleoside-2-P kinase</fullName>
    </alternativeName>
</protein>
<dbReference type="EC" id="2.7.4.6" evidence="1"/>
<dbReference type="EMBL" id="BA000036">
    <property type="protein sequence ID" value="BAB99763.1"/>
    <property type="molecule type" value="Genomic_DNA"/>
</dbReference>
<dbReference type="EMBL" id="BX927155">
    <property type="protein sequence ID" value="CAF21035.1"/>
    <property type="molecule type" value="Genomic_DNA"/>
</dbReference>
<dbReference type="RefSeq" id="NP_601571.1">
    <property type="nucleotide sequence ID" value="NC_003450.3"/>
</dbReference>
<dbReference type="RefSeq" id="WP_003859294.1">
    <property type="nucleotide sequence ID" value="NC_006958.1"/>
</dbReference>
<dbReference type="SMR" id="Q8NN43"/>
<dbReference type="STRING" id="196627.cg2603"/>
<dbReference type="GeneID" id="1020320"/>
<dbReference type="KEGG" id="cgb:cg2603"/>
<dbReference type="KEGG" id="cgl:Cgl2370"/>
<dbReference type="PATRIC" id="fig|196627.13.peg.2305"/>
<dbReference type="eggNOG" id="COG0105">
    <property type="taxonomic scope" value="Bacteria"/>
</dbReference>
<dbReference type="HOGENOM" id="CLU_060216_6_3_11"/>
<dbReference type="OrthoDB" id="9801161at2"/>
<dbReference type="BioCyc" id="CORYNE:G18NG-11967-MONOMER"/>
<dbReference type="Proteomes" id="UP000000582">
    <property type="component" value="Chromosome"/>
</dbReference>
<dbReference type="Proteomes" id="UP000001009">
    <property type="component" value="Chromosome"/>
</dbReference>
<dbReference type="GO" id="GO:0005737">
    <property type="term" value="C:cytoplasm"/>
    <property type="evidence" value="ECO:0007669"/>
    <property type="project" value="UniProtKB-SubCell"/>
</dbReference>
<dbReference type="GO" id="GO:0005524">
    <property type="term" value="F:ATP binding"/>
    <property type="evidence" value="ECO:0007669"/>
    <property type="project" value="UniProtKB-UniRule"/>
</dbReference>
<dbReference type="GO" id="GO:0046872">
    <property type="term" value="F:metal ion binding"/>
    <property type="evidence" value="ECO:0007669"/>
    <property type="project" value="UniProtKB-KW"/>
</dbReference>
<dbReference type="GO" id="GO:0004550">
    <property type="term" value="F:nucleoside diphosphate kinase activity"/>
    <property type="evidence" value="ECO:0007669"/>
    <property type="project" value="UniProtKB-UniRule"/>
</dbReference>
<dbReference type="GO" id="GO:0006241">
    <property type="term" value="P:CTP biosynthetic process"/>
    <property type="evidence" value="ECO:0007669"/>
    <property type="project" value="UniProtKB-UniRule"/>
</dbReference>
<dbReference type="GO" id="GO:0006183">
    <property type="term" value="P:GTP biosynthetic process"/>
    <property type="evidence" value="ECO:0007669"/>
    <property type="project" value="UniProtKB-UniRule"/>
</dbReference>
<dbReference type="GO" id="GO:0006228">
    <property type="term" value="P:UTP biosynthetic process"/>
    <property type="evidence" value="ECO:0007669"/>
    <property type="project" value="UniProtKB-UniRule"/>
</dbReference>
<dbReference type="CDD" id="cd04413">
    <property type="entry name" value="NDPk_I"/>
    <property type="match status" value="1"/>
</dbReference>
<dbReference type="FunFam" id="3.30.70.141:FF:000003">
    <property type="entry name" value="Nucleoside diphosphate kinase"/>
    <property type="match status" value="1"/>
</dbReference>
<dbReference type="Gene3D" id="3.30.70.141">
    <property type="entry name" value="Nucleoside diphosphate kinase-like domain"/>
    <property type="match status" value="1"/>
</dbReference>
<dbReference type="HAMAP" id="MF_00451">
    <property type="entry name" value="NDP_kinase"/>
    <property type="match status" value="1"/>
</dbReference>
<dbReference type="InterPro" id="IPR034907">
    <property type="entry name" value="NDK-like_dom"/>
</dbReference>
<dbReference type="InterPro" id="IPR036850">
    <property type="entry name" value="NDK-like_dom_sf"/>
</dbReference>
<dbReference type="InterPro" id="IPR001564">
    <property type="entry name" value="Nucleoside_diP_kinase"/>
</dbReference>
<dbReference type="InterPro" id="IPR023005">
    <property type="entry name" value="Nucleoside_diP_kinase_AS"/>
</dbReference>
<dbReference type="NCBIfam" id="NF001908">
    <property type="entry name" value="PRK00668.1"/>
    <property type="match status" value="1"/>
</dbReference>
<dbReference type="PANTHER" id="PTHR11349">
    <property type="entry name" value="NUCLEOSIDE DIPHOSPHATE KINASE"/>
    <property type="match status" value="1"/>
</dbReference>
<dbReference type="Pfam" id="PF00334">
    <property type="entry name" value="NDK"/>
    <property type="match status" value="1"/>
</dbReference>
<dbReference type="PRINTS" id="PR01243">
    <property type="entry name" value="NUCDPKINASE"/>
</dbReference>
<dbReference type="SMART" id="SM00562">
    <property type="entry name" value="NDK"/>
    <property type="match status" value="1"/>
</dbReference>
<dbReference type="SUPFAM" id="SSF54919">
    <property type="entry name" value="Nucleoside diphosphate kinase, NDK"/>
    <property type="match status" value="1"/>
</dbReference>
<dbReference type="PROSITE" id="PS00469">
    <property type="entry name" value="NDPK"/>
    <property type="match status" value="1"/>
</dbReference>
<dbReference type="PROSITE" id="PS51374">
    <property type="entry name" value="NDPK_LIKE"/>
    <property type="match status" value="1"/>
</dbReference>
<comment type="function">
    <text evidence="1">Major role in the synthesis of nucleoside triphosphates other than ATP. The ATP gamma phosphate is transferred to the NDP beta phosphate via a ping-pong mechanism, using a phosphorylated active-site intermediate.</text>
</comment>
<comment type="catalytic activity">
    <reaction evidence="1">
        <text>a 2'-deoxyribonucleoside 5'-diphosphate + ATP = a 2'-deoxyribonucleoside 5'-triphosphate + ADP</text>
        <dbReference type="Rhea" id="RHEA:44640"/>
        <dbReference type="ChEBI" id="CHEBI:30616"/>
        <dbReference type="ChEBI" id="CHEBI:61560"/>
        <dbReference type="ChEBI" id="CHEBI:73316"/>
        <dbReference type="ChEBI" id="CHEBI:456216"/>
        <dbReference type="EC" id="2.7.4.6"/>
    </reaction>
</comment>
<comment type="catalytic activity">
    <reaction evidence="1">
        <text>a ribonucleoside 5'-diphosphate + ATP = a ribonucleoside 5'-triphosphate + ADP</text>
        <dbReference type="Rhea" id="RHEA:18113"/>
        <dbReference type="ChEBI" id="CHEBI:30616"/>
        <dbReference type="ChEBI" id="CHEBI:57930"/>
        <dbReference type="ChEBI" id="CHEBI:61557"/>
        <dbReference type="ChEBI" id="CHEBI:456216"/>
        <dbReference type="EC" id="2.7.4.6"/>
    </reaction>
</comment>
<comment type="cofactor">
    <cofactor evidence="1">
        <name>Mg(2+)</name>
        <dbReference type="ChEBI" id="CHEBI:18420"/>
    </cofactor>
</comment>
<comment type="subunit">
    <text evidence="1">Homotetramer.</text>
</comment>
<comment type="subcellular location">
    <subcellularLocation>
        <location evidence="1">Cytoplasm</location>
    </subcellularLocation>
</comment>
<comment type="similarity">
    <text evidence="1">Belongs to the NDK family.</text>
</comment>
<gene>
    <name evidence="1" type="primary">ndk</name>
    <name type="ordered locus">Cgl2370</name>
    <name type="ordered locus">cg2603</name>
</gene>
<feature type="chain" id="PRO_0000136973" description="Nucleoside diphosphate kinase">
    <location>
        <begin position="1"/>
        <end position="136"/>
    </location>
</feature>
<feature type="active site" description="Pros-phosphohistidine intermediate" evidence="1">
    <location>
        <position position="117"/>
    </location>
</feature>
<feature type="binding site" evidence="1">
    <location>
        <position position="10"/>
    </location>
    <ligand>
        <name>ATP</name>
        <dbReference type="ChEBI" id="CHEBI:30616"/>
    </ligand>
</feature>
<feature type="binding site" evidence="1">
    <location>
        <position position="58"/>
    </location>
    <ligand>
        <name>ATP</name>
        <dbReference type="ChEBI" id="CHEBI:30616"/>
    </ligand>
</feature>
<feature type="binding site" evidence="1">
    <location>
        <position position="86"/>
    </location>
    <ligand>
        <name>ATP</name>
        <dbReference type="ChEBI" id="CHEBI:30616"/>
    </ligand>
</feature>
<feature type="binding site" evidence="1">
    <location>
        <position position="92"/>
    </location>
    <ligand>
        <name>ATP</name>
        <dbReference type="ChEBI" id="CHEBI:30616"/>
    </ligand>
</feature>
<feature type="binding site" evidence="1">
    <location>
        <position position="104"/>
    </location>
    <ligand>
        <name>ATP</name>
        <dbReference type="ChEBI" id="CHEBI:30616"/>
    </ligand>
</feature>
<feature type="binding site" evidence="1">
    <location>
        <position position="114"/>
    </location>
    <ligand>
        <name>ATP</name>
        <dbReference type="ChEBI" id="CHEBI:30616"/>
    </ligand>
</feature>
<keyword id="KW-0067">ATP-binding</keyword>
<keyword id="KW-0963">Cytoplasm</keyword>
<keyword id="KW-0418">Kinase</keyword>
<keyword id="KW-0460">Magnesium</keyword>
<keyword id="KW-0479">Metal-binding</keyword>
<keyword id="KW-0546">Nucleotide metabolism</keyword>
<keyword id="KW-0547">Nucleotide-binding</keyword>
<keyword id="KW-0597">Phosphoprotein</keyword>
<keyword id="KW-1185">Reference proteome</keyword>
<keyword id="KW-0808">Transferase</keyword>
<name>NDK_CORGL</name>
<sequence length="136" mass="14800">MTERTLILIKPDGVTNGHVGEIIARIERKGLKLAALDLRVADRETAEKHYEEHADKPFFGELVEFITSAPLIAGIVEGERAIDAWRQLAGGTDPVAKATPGTIRGDFALTVGENVVHGSDSPESAEREISIWFPNL</sequence>
<accession>Q8NN43</accession>
<reference key="1">
    <citation type="journal article" date="2003" name="Appl. Microbiol. Biotechnol.">
        <title>The Corynebacterium glutamicum genome: features and impacts on biotechnological processes.</title>
        <authorList>
            <person name="Ikeda M."/>
            <person name="Nakagawa S."/>
        </authorList>
    </citation>
    <scope>NUCLEOTIDE SEQUENCE [LARGE SCALE GENOMIC DNA]</scope>
    <source>
        <strain>ATCC 13032 / DSM 20300 / JCM 1318 / BCRC 11384 / CCUG 27702 / LMG 3730 / NBRC 12168 / NCIMB 10025 / NRRL B-2784 / 534</strain>
    </source>
</reference>
<reference key="2">
    <citation type="journal article" date="2003" name="J. Biotechnol.">
        <title>The complete Corynebacterium glutamicum ATCC 13032 genome sequence and its impact on the production of L-aspartate-derived amino acids and vitamins.</title>
        <authorList>
            <person name="Kalinowski J."/>
            <person name="Bathe B."/>
            <person name="Bartels D."/>
            <person name="Bischoff N."/>
            <person name="Bott M."/>
            <person name="Burkovski A."/>
            <person name="Dusch N."/>
            <person name="Eggeling L."/>
            <person name="Eikmanns B.J."/>
            <person name="Gaigalat L."/>
            <person name="Goesmann A."/>
            <person name="Hartmann M."/>
            <person name="Huthmacher K."/>
            <person name="Kraemer R."/>
            <person name="Linke B."/>
            <person name="McHardy A.C."/>
            <person name="Meyer F."/>
            <person name="Moeckel B."/>
            <person name="Pfefferle W."/>
            <person name="Puehler A."/>
            <person name="Rey D.A."/>
            <person name="Rueckert C."/>
            <person name="Rupp O."/>
            <person name="Sahm H."/>
            <person name="Wendisch V.F."/>
            <person name="Wiegraebe I."/>
            <person name="Tauch A."/>
        </authorList>
    </citation>
    <scope>NUCLEOTIDE SEQUENCE [LARGE SCALE GENOMIC DNA]</scope>
    <source>
        <strain>ATCC 13032 / DSM 20300 / JCM 1318 / BCRC 11384 / CCUG 27702 / LMG 3730 / NBRC 12168 / NCIMB 10025 / NRRL B-2784 / 534</strain>
    </source>
</reference>
<proteinExistence type="inferred from homology"/>